<protein>
    <recommendedName>
        <fullName>Taste receptor type 2 member 114</fullName>
        <shortName>T2R114</shortName>
        <shortName>mT2R46</shortName>
    </recommendedName>
</protein>
<name>TR114_MOUSE</name>
<feature type="chain" id="PRO_0000248473" description="Taste receptor type 2 member 114">
    <location>
        <begin position="1"/>
        <end position="309"/>
    </location>
</feature>
<feature type="topological domain" description="Extracellular" evidence="1">
    <location>
        <begin position="1"/>
        <end position="7"/>
    </location>
</feature>
<feature type="transmembrane region" description="Helical; Name=1" evidence="1">
    <location>
        <begin position="8"/>
        <end position="28"/>
    </location>
</feature>
<feature type="topological domain" description="Cytoplasmic" evidence="1">
    <location>
        <begin position="29"/>
        <end position="43"/>
    </location>
</feature>
<feature type="transmembrane region" description="Helical; Name=2" evidence="1">
    <location>
        <begin position="44"/>
        <end position="64"/>
    </location>
</feature>
<feature type="topological domain" description="Extracellular" evidence="1">
    <location>
        <begin position="65"/>
        <end position="87"/>
    </location>
</feature>
<feature type="transmembrane region" description="Helical; Name=3" evidence="1">
    <location>
        <begin position="88"/>
        <end position="108"/>
    </location>
</feature>
<feature type="topological domain" description="Cytoplasmic" evidence="1">
    <location>
        <begin position="109"/>
        <end position="127"/>
    </location>
</feature>
<feature type="transmembrane region" description="Helical; Name=4" evidence="1">
    <location>
        <begin position="128"/>
        <end position="148"/>
    </location>
</feature>
<feature type="topological domain" description="Extracellular" evidence="1">
    <location>
        <begin position="149"/>
        <end position="182"/>
    </location>
</feature>
<feature type="transmembrane region" description="Helical; Name=5" evidence="1">
    <location>
        <begin position="183"/>
        <end position="203"/>
    </location>
</feature>
<feature type="topological domain" description="Cytoplasmic" evidence="1">
    <location>
        <begin position="204"/>
        <end position="233"/>
    </location>
</feature>
<feature type="transmembrane region" description="Helical; Name=6" evidence="1">
    <location>
        <begin position="234"/>
        <end position="254"/>
    </location>
</feature>
<feature type="topological domain" description="Extracellular" evidence="1">
    <location>
        <begin position="255"/>
        <end position="259"/>
    </location>
</feature>
<feature type="transmembrane region" description="Helical; Name=7" evidence="1">
    <location>
        <begin position="260"/>
        <end position="280"/>
    </location>
</feature>
<feature type="topological domain" description="Cytoplasmic" evidence="1">
    <location>
        <begin position="281"/>
        <end position="309"/>
    </location>
</feature>
<feature type="glycosylation site" description="N-linked (GlcNAc...) asparagine" evidence="1">
    <location>
        <position position="161"/>
    </location>
</feature>
<accession>Q7M722</accession>
<organism>
    <name type="scientific">Mus musculus</name>
    <name type="common">Mouse</name>
    <dbReference type="NCBI Taxonomy" id="10090"/>
    <lineage>
        <taxon>Eukaryota</taxon>
        <taxon>Metazoa</taxon>
        <taxon>Chordata</taxon>
        <taxon>Craniata</taxon>
        <taxon>Vertebrata</taxon>
        <taxon>Euteleostomi</taxon>
        <taxon>Mammalia</taxon>
        <taxon>Eutheria</taxon>
        <taxon>Euarchontoglires</taxon>
        <taxon>Glires</taxon>
        <taxon>Rodentia</taxon>
        <taxon>Myomorpha</taxon>
        <taxon>Muroidea</taxon>
        <taxon>Muridae</taxon>
        <taxon>Murinae</taxon>
        <taxon>Mus</taxon>
        <taxon>Mus</taxon>
    </lineage>
</organism>
<evidence type="ECO:0000255" key="1"/>
<evidence type="ECO:0000303" key="2">
    <source>
    </source>
</evidence>
<evidence type="ECO:0000305" key="3"/>
<evidence type="ECO:0000312" key="4">
    <source>
        <dbReference type="EMBL" id="DAA01214.1"/>
    </source>
</evidence>
<evidence type="ECO:0000312" key="5">
    <source>
        <dbReference type="MGI" id="MGI:2681218"/>
    </source>
</evidence>
<gene>
    <name evidence="5" type="primary">Tas2r114</name>
    <name evidence="2" type="synonym">T2r46</name>
</gene>
<proteinExistence type="inferred from homology"/>
<keyword id="KW-0297">G-protein coupled receptor</keyword>
<keyword id="KW-0325">Glycoprotein</keyword>
<keyword id="KW-0472">Membrane</keyword>
<keyword id="KW-0675">Receptor</keyword>
<keyword id="KW-1185">Reference proteome</keyword>
<keyword id="KW-0716">Sensory transduction</keyword>
<keyword id="KW-0919">Taste</keyword>
<keyword id="KW-0807">Transducer</keyword>
<keyword id="KW-0812">Transmembrane</keyword>
<keyword id="KW-1133">Transmembrane helix</keyword>
<dbReference type="EMBL" id="AC129318">
    <property type="status" value="NOT_ANNOTATED_CDS"/>
    <property type="molecule type" value="Genomic_DNA"/>
</dbReference>
<dbReference type="EMBL" id="BK001075">
    <property type="protein sequence ID" value="DAA01214.1"/>
    <property type="molecule type" value="Genomic_DNA"/>
</dbReference>
<dbReference type="CCDS" id="CCDS20613.1"/>
<dbReference type="RefSeq" id="NP_996902.1">
    <property type="nucleotide sequence ID" value="NM_207019.1"/>
</dbReference>
<dbReference type="SMR" id="Q7M722"/>
<dbReference type="FunCoup" id="Q7M722">
    <property type="interactions" value="152"/>
</dbReference>
<dbReference type="STRING" id="10090.ENSMUSP00000079453"/>
<dbReference type="GlyCosmos" id="Q7M722">
    <property type="glycosylation" value="1 site, No reported glycans"/>
</dbReference>
<dbReference type="GlyGen" id="Q7M722">
    <property type="glycosylation" value="1 site"/>
</dbReference>
<dbReference type="iPTMnet" id="Q7M722"/>
<dbReference type="PhosphoSitePlus" id="Q7M722"/>
<dbReference type="jPOST" id="Q7M722"/>
<dbReference type="PaxDb" id="10090-ENSMUSP00000079453"/>
<dbReference type="DNASU" id="387346"/>
<dbReference type="Ensembl" id="ENSMUST00000080619.3">
    <property type="protein sequence ID" value="ENSMUSP00000079453.3"/>
    <property type="gene ID" value="ENSMUSG00000063478.3"/>
</dbReference>
<dbReference type="GeneID" id="387346"/>
<dbReference type="KEGG" id="mmu:387346"/>
<dbReference type="UCSC" id="uc009eja.1">
    <property type="organism name" value="mouse"/>
</dbReference>
<dbReference type="AGR" id="MGI:2681218"/>
<dbReference type="CTD" id="387346"/>
<dbReference type="MGI" id="MGI:2681218">
    <property type="gene designation" value="Tas2r114"/>
</dbReference>
<dbReference type="VEuPathDB" id="HostDB:ENSMUSG00000063478"/>
<dbReference type="eggNOG" id="ENOG502T3AX">
    <property type="taxonomic scope" value="Eukaryota"/>
</dbReference>
<dbReference type="GeneTree" id="ENSGT01100000263477"/>
<dbReference type="HOGENOM" id="CLU_072337_3_0_1"/>
<dbReference type="InParanoid" id="Q7M722"/>
<dbReference type="OMA" id="WLFTFPQ"/>
<dbReference type="OrthoDB" id="8876749at2759"/>
<dbReference type="PhylomeDB" id="Q7M722"/>
<dbReference type="TreeFam" id="TF335891"/>
<dbReference type="BioGRID-ORCS" id="387346">
    <property type="hits" value="2 hits in 77 CRISPR screens"/>
</dbReference>
<dbReference type="PRO" id="PR:Q7M722"/>
<dbReference type="Proteomes" id="UP000000589">
    <property type="component" value="Chromosome 6"/>
</dbReference>
<dbReference type="RNAct" id="Q7M722">
    <property type="molecule type" value="protein"/>
</dbReference>
<dbReference type="GO" id="GO:0016020">
    <property type="term" value="C:membrane"/>
    <property type="evidence" value="ECO:0007669"/>
    <property type="project" value="UniProtKB-SubCell"/>
</dbReference>
<dbReference type="GO" id="GO:0033038">
    <property type="term" value="F:bitter taste receptor activity"/>
    <property type="evidence" value="ECO:0007669"/>
    <property type="project" value="InterPro"/>
</dbReference>
<dbReference type="GO" id="GO:0004930">
    <property type="term" value="F:G protein-coupled receptor activity"/>
    <property type="evidence" value="ECO:0007669"/>
    <property type="project" value="UniProtKB-KW"/>
</dbReference>
<dbReference type="CDD" id="cd15021">
    <property type="entry name" value="7tm_TAS2R10"/>
    <property type="match status" value="1"/>
</dbReference>
<dbReference type="FunFam" id="1.20.1070.10:FF:000042">
    <property type="entry name" value="Taste receptor type 2 member 7"/>
    <property type="match status" value="1"/>
</dbReference>
<dbReference type="Gene3D" id="1.20.1070.10">
    <property type="entry name" value="Rhodopsin 7-helix transmembrane proteins"/>
    <property type="match status" value="1"/>
</dbReference>
<dbReference type="InterPro" id="IPR007960">
    <property type="entry name" value="TAS2R"/>
</dbReference>
<dbReference type="PANTHER" id="PTHR11394">
    <property type="entry name" value="TASTE RECEPTOR TYPE 2"/>
    <property type="match status" value="1"/>
</dbReference>
<dbReference type="PANTHER" id="PTHR11394:SF50">
    <property type="entry name" value="TASTE RECEPTOR TYPE 2 MEMBER 114"/>
    <property type="match status" value="1"/>
</dbReference>
<dbReference type="Pfam" id="PF05296">
    <property type="entry name" value="TAS2R"/>
    <property type="match status" value="1"/>
</dbReference>
<dbReference type="SUPFAM" id="SSF81321">
    <property type="entry name" value="Family A G protein-coupled receptor-like"/>
    <property type="match status" value="1"/>
</dbReference>
<comment type="function">
    <text evidence="3">Putative taste receptor which may play a role in the perception of bitterness.</text>
</comment>
<comment type="subcellular location">
    <subcellularLocation>
        <location evidence="3">Membrane</location>
        <topology evidence="3">Multi-pass membrane protein</topology>
    </subcellularLocation>
</comment>
<comment type="miscellaneous">
    <text evidence="3">Several bitter taste receptors are expressed in a single taste receptor cell.</text>
</comment>
<comment type="similarity">
    <text evidence="1">Belongs to the G-protein coupled receptor T2R family.</text>
</comment>
<sequence>MLSTMEGVLLSVSTSEAVLGIVGNTFIALVNCMDYNRNKKLSNIGFILTGLAISRICLVLILITEAYIKIFYPQLLSPVNIIELISYLWIIICQLNVWFATSLSIFYFLKIANFSHYIFVWLKRRIDLVFFFLIGCLLISWLFSFPVVAKMVKDNKMLYINTSWQIHMKKSELIINYVFTNGGVFLFFMIMLIVCFLLIISLWRHRRQMESNKLGFRDLNTEVHVRTIKVLLSFIILFILHFMGITINVICLLIPESNLLFMFGLTTAFIYPGCHSLILILANSRLKQCSVMILQLLKCCENGKELRDT</sequence>
<reference key="1">
    <citation type="journal article" date="2009" name="PLoS Biol.">
        <title>Lineage-specific biology revealed by a finished genome assembly of the mouse.</title>
        <authorList>
            <person name="Church D.M."/>
            <person name="Goodstadt L."/>
            <person name="Hillier L.W."/>
            <person name="Zody M.C."/>
            <person name="Goldstein S."/>
            <person name="She X."/>
            <person name="Bult C.J."/>
            <person name="Agarwala R."/>
            <person name="Cherry J.L."/>
            <person name="DiCuccio M."/>
            <person name="Hlavina W."/>
            <person name="Kapustin Y."/>
            <person name="Meric P."/>
            <person name="Maglott D."/>
            <person name="Birtle Z."/>
            <person name="Marques A.C."/>
            <person name="Graves T."/>
            <person name="Zhou S."/>
            <person name="Teague B."/>
            <person name="Potamousis K."/>
            <person name="Churas C."/>
            <person name="Place M."/>
            <person name="Herschleb J."/>
            <person name="Runnheim R."/>
            <person name="Forrest D."/>
            <person name="Amos-Landgraf J."/>
            <person name="Schwartz D.C."/>
            <person name="Cheng Z."/>
            <person name="Lindblad-Toh K."/>
            <person name="Eichler E.E."/>
            <person name="Ponting C.P."/>
        </authorList>
    </citation>
    <scope>NUCLEOTIDE SEQUENCE [LARGE SCALE GENOMIC DNA]</scope>
    <source>
        <strain>C57BL/6J</strain>
    </source>
</reference>
<reference evidence="3 4" key="2">
    <citation type="journal article" date="2003" name="Mol. Biol. Evol.">
        <title>Adaptive diversification of bitter taste receptor genes in mammalian evolution.</title>
        <authorList>
            <person name="Shi P."/>
            <person name="Zhang J."/>
            <person name="Yang H."/>
            <person name="Zhang Y.-P."/>
        </authorList>
    </citation>
    <scope>IDENTIFICATION</scope>
</reference>